<feature type="chain" id="PRO_0000047757" description="PR domain zinc finger protein 1">
    <location>
        <begin position="1"/>
        <end position="825"/>
    </location>
</feature>
<feature type="domain" description="SET" evidence="3">
    <location>
        <begin position="84"/>
        <end position="201"/>
    </location>
</feature>
<feature type="zinc finger region" description="C2H2-type 1" evidence="2">
    <location>
        <begin position="575"/>
        <end position="597"/>
    </location>
</feature>
<feature type="zinc finger region" description="C2H2-type 2" evidence="2">
    <location>
        <begin position="603"/>
        <end position="625"/>
    </location>
</feature>
<feature type="zinc finger region" description="C2H2-type 3" evidence="2">
    <location>
        <begin position="631"/>
        <end position="653"/>
    </location>
</feature>
<feature type="zinc finger region" description="C2H2-type 4" evidence="2">
    <location>
        <begin position="659"/>
        <end position="681"/>
    </location>
</feature>
<feature type="region of interest" description="Disordered" evidence="4">
    <location>
        <begin position="324"/>
        <end position="369"/>
    </location>
</feature>
<feature type="region of interest" description="Interaction with PIAS1">
    <location>
        <begin position="527"/>
        <end position="574"/>
    </location>
</feature>
<feature type="compositionally biased region" description="Low complexity" evidence="4">
    <location>
        <begin position="324"/>
        <end position="361"/>
    </location>
</feature>
<feature type="cross-link" description="Glycyl lysine isopeptide (Lys-Gly) (interchain with G-Cter in SUMO1); alternate" evidence="8">
    <location>
        <position position="816"/>
    </location>
</feature>
<feature type="cross-link" description="Glycyl lysine isopeptide (Lys-Gly) (interchain with G-Cter in SUMO2); alternate" evidence="17">
    <location>
        <position position="816"/>
    </location>
</feature>
<feature type="splice variant" id="VSP_039188" description="In isoform 2." evidence="15">
    <location>
        <begin position="1"/>
        <end position="36"/>
    </location>
</feature>
<feature type="splice variant" id="VSP_043646" description="In isoform 3." evidence="13 14">
    <original>MLD</original>
    <variation>MEK</variation>
    <location>
        <begin position="1"/>
        <end position="3"/>
    </location>
</feature>
<feature type="splice variant" id="VSP_043647" description="In isoform 3." evidence="13 14">
    <location>
        <begin position="4"/>
        <end position="137"/>
    </location>
</feature>
<feature type="sequence variant" id="VAR_019983" description="In dbSNP:rs2185379.">
    <original>G</original>
    <variation>S</variation>
    <location>
        <position position="74"/>
    </location>
</feature>
<feature type="sequence variant" id="VAR_083591" description="Found in an activated B cell-like diffuse large B-cell lymphoma (ABC-DLBCL) cell line; protein instability caused by increased susceptibility to proteasomal degradation." evidence="11">
    <original>P</original>
    <variation>R</variation>
    <location>
        <position position="84"/>
    </location>
</feature>
<feature type="sequence variant" id="VAR_083592" description="Found in an activated B cell-like diffuse large B-cell lymphoma (ABC-DLBCL) cell line; protein instability caused by increased susceptibility to proteasomal degradation." evidence="11">
    <original>I</original>
    <variation>R</variation>
    <location>
        <position position="107"/>
    </location>
</feature>
<feature type="sequence variant" id="VAR_024221" description="In dbSNP:rs811925.">
    <original>D</original>
    <variation>E</variation>
    <location>
        <position position="203"/>
    </location>
</feature>
<feature type="mutagenesis site" description="Protein instability caused by increased susceptibility to proteasomal degradation." evidence="11">
    <original>P</original>
    <variation>G</variation>
    <variation>K</variation>
    <location>
        <position position="84"/>
    </location>
</feature>
<feature type="mutagenesis site" description="Protein instability caused by increased susceptibility to proteasomal degradation." evidence="11">
    <original>I</original>
    <variation>G</variation>
    <variation>K</variation>
    <location>
        <position position="107"/>
    </location>
</feature>
<feature type="helix" evidence="18">
    <location>
        <begin position="51"/>
        <end position="57"/>
    </location>
</feature>
<feature type="strand" evidence="18">
    <location>
        <begin position="60"/>
        <end position="62"/>
    </location>
</feature>
<feature type="helix" evidence="18">
    <location>
        <begin position="78"/>
        <end position="81"/>
    </location>
</feature>
<feature type="strand" evidence="18">
    <location>
        <begin position="87"/>
        <end position="91"/>
    </location>
</feature>
<feature type="strand" evidence="18">
    <location>
        <begin position="98"/>
        <end position="105"/>
    </location>
</feature>
<feature type="strand" evidence="18">
    <location>
        <begin position="111"/>
        <end position="113"/>
    </location>
</feature>
<feature type="strand" evidence="18">
    <location>
        <begin position="119"/>
        <end position="121"/>
    </location>
</feature>
<feature type="turn" evidence="18">
    <location>
        <begin position="123"/>
        <end position="125"/>
    </location>
</feature>
<feature type="strand" evidence="18">
    <location>
        <begin position="135"/>
        <end position="140"/>
    </location>
</feature>
<feature type="strand" evidence="18">
    <location>
        <begin position="143"/>
        <end position="149"/>
    </location>
</feature>
<feature type="helix" evidence="18">
    <location>
        <begin position="158"/>
        <end position="161"/>
    </location>
</feature>
<feature type="turn" evidence="18">
    <location>
        <begin position="168"/>
        <end position="170"/>
    </location>
</feature>
<feature type="strand" evidence="18">
    <location>
        <begin position="173"/>
        <end position="178"/>
    </location>
</feature>
<feature type="strand" evidence="18">
    <location>
        <begin position="181"/>
        <end position="188"/>
    </location>
</feature>
<feature type="strand" evidence="18">
    <location>
        <begin position="197"/>
        <end position="200"/>
    </location>
</feature>
<feature type="helix" evidence="18">
    <location>
        <begin position="202"/>
        <end position="207"/>
    </location>
</feature>
<feature type="helix" evidence="18">
    <location>
        <begin position="218"/>
        <end position="222"/>
    </location>
</feature>
<comment type="function">
    <text evidence="1 5 6">Transcription factor that mediates a transcriptional program in various innate and adaptive immune tissue-resident lymphocyte T cell types such as tissue-resident memory T (Trm), natural killer (trNK) and natural killer T (NKT) cells and negatively regulates gene expression of proteins that promote the egress of tissue-resident T-cell populations from non-lymphoid organs. Plays a role in the development, retention and long-term establishment of adaptive and innate tissue-resident lymphocyte T cell types in non-lymphoid organs, such as the skin and gut, but also in other nonbarrier tissues like liver and kidney, and therefore may provide immediate immunological protection against reactivating infections or viral reinfection (By similarity). Binds specifically to the PRDI element in the promoter of the beta-interferon gene (PubMed:1851123). Drives the maturation of B-lymphocytes into Ig secreting cells (PubMed:12626569). Associates with the transcriptional repressor ZNF683 to chromatin at gene promoter regions (By similarity). Binds to the promoter and acts as a transcriptional repressor of IRF8, thereby promotes transcription of osteoclast differentiation factors such as NFATC1 and EEIG1 (By similarity).</text>
</comment>
<comment type="subunit">
    <text evidence="1 9 10 11 12">Interacts with PRMT5 (By similarity). Interacts with FBXO10 (PubMed:24613396). Interacts with FBXO11 (PubMed:24613396, PubMed:24968003). Interacts with multiple nuclear sumoylation E3 ligases, including CBX4, PIAS1, PIAS2, PIAS3, PIAS4, PML and RNF4, but not RANBP2 (PubMed:28842558). Interacts with LDB1, SMARCD3 and SMARCC1 (PubMed:32417234). Interacts with EEIG1; following TNFSF11/RANKL stimulation in bone marrow-derived macrophages, the interaction promotes the binding of PRDM1/BLIMP1 to the gene promoter of IRF8 (By similarity).</text>
</comment>
<comment type="interaction">
    <interactant intactId="EBI-948789">
        <id>O75626</id>
    </interactant>
    <interactant intactId="EBI-629434">
        <id>O75925</id>
        <label>PIAS1</label>
    </interactant>
    <organismsDiffer>false</organismsDiffer>
    <experiments>2</experiments>
</comment>
<comment type="interaction">
    <interactant intactId="EBI-7839538">
        <id>O75626-2</id>
    </interactant>
    <interactant intactId="EBI-80140">
        <id>P63165</id>
        <label>SUMO1</label>
    </interactant>
    <organismsDiffer>false</organismsDiffer>
    <experiments>2</experiments>
</comment>
<comment type="interaction">
    <interactant intactId="EBI-25829882">
        <id>O75626-3</id>
    </interactant>
    <interactant intactId="EBI-640741">
        <id>P01023</id>
        <label>A2M</label>
    </interactant>
    <organismsDiffer>false</organismsDiffer>
    <experiments>3</experiments>
</comment>
<comment type="interaction">
    <interactant intactId="EBI-25829882">
        <id>O75626-3</id>
    </interactant>
    <interactant intactId="EBI-10968534">
        <id>P50570-2</id>
        <label>DNM2</label>
    </interactant>
    <organismsDiffer>false</organismsDiffer>
    <experiments>3</experiments>
</comment>
<comment type="interaction">
    <interactant intactId="EBI-25829882">
        <id>O75626-3</id>
    </interactant>
    <interactant intactId="EBI-25847109">
        <id>O14656-2</id>
        <label>TOR1A</label>
    </interactant>
    <organismsDiffer>false</organismsDiffer>
    <experiments>3</experiments>
</comment>
<comment type="subcellular location">
    <subcellularLocation>
        <location evidence="11">Nucleus</location>
    </subcellularLocation>
    <subcellularLocation>
        <location evidence="7">Cytoplasm</location>
    </subcellularLocation>
</comment>
<comment type="alternative products">
    <event type="alternative splicing"/>
    <isoform>
        <id>O75626-1</id>
        <name>1</name>
        <sequence type="displayed"/>
    </isoform>
    <isoform>
        <id>O75626-2</id>
        <name>2</name>
        <sequence type="described" ref="VSP_039188"/>
    </isoform>
    <isoform>
        <id>O75626-3</id>
        <name>3</name>
        <sequence type="described" ref="VSP_043646 VSP_043647"/>
    </isoform>
</comment>
<comment type="PTM">
    <text evidence="8 11">Sumoylation at Lys-816 by PIAS1 augments transcriptional repressor activity, and is critical for plasma cell differentiation (PubMed:22555612). Can be sumoylated with SUMO1 and SUMO2 by PML. Degradation of the wild-type protein mostly depends upon sumoylation, rather than ubiquitination (PubMed:28842558). Desumoylated by SENP1 and SENP6 (PubMed:28842558).</text>
</comment>
<comment type="PTM">
    <text evidence="9">Ubiquitinated by the SCF(FBXO11) complex, leading to its degradation by the proteasome.</text>
</comment>
<comment type="disease">
    <text evidence="11">In certain aggressive cases of activated B cell-like diffuse large B-cell lymphoma (ABC-DLBCL), PRDM1 protein instability has been observed. This instability, which impairs B-cell differentiation, is caused by N-terminal misfolding mutations, including those occurring at positions Pro-84 and Ile-107, and results in PRDM1 protein sequestration in the cytoplasm, followed by proteasomal degradation via a heat shock protein 70 HSPA1A-SYNV1/HRD1 pathway. These N-terminal mutations do not affect PRDM1 transcription regulation activity. HSPA1A inhibition restores PRDM1 nuclear localization and transcriptional activity in lymphoma cell lines and suppresses tumor growth in xenografts, more efficiently than proteasome inhibition.</text>
</comment>
<comment type="similarity">
    <text evidence="3">Belongs to the class V-like SAM-binding methyltransferase superfamily.</text>
</comment>
<comment type="sequence caution" evidence="16">
    <conflict type="erroneous initiation">
        <sequence resource="EMBL-CDS" id="AAO45623"/>
    </conflict>
    <text>Truncated N-terminus.</text>
</comment>
<comment type="online information" name="Atlas of Genetics and Cytogenetics in Oncology and Haematology">
    <link uri="https://atlasgeneticsoncology.org/gene/41831/PRDM1"/>
</comment>
<keyword id="KW-0002">3D-structure</keyword>
<keyword id="KW-1064">Adaptive immunity</keyword>
<keyword id="KW-0025">Alternative splicing</keyword>
<keyword id="KW-0963">Cytoplasm</keyword>
<keyword id="KW-0238">DNA-binding</keyword>
<keyword id="KW-0391">Immunity</keyword>
<keyword id="KW-0399">Innate immunity</keyword>
<keyword id="KW-1017">Isopeptide bond</keyword>
<keyword id="KW-0479">Metal-binding</keyword>
<keyword id="KW-0489">Methyltransferase</keyword>
<keyword id="KW-0539">Nucleus</keyword>
<keyword id="KW-1267">Proteomics identification</keyword>
<keyword id="KW-1185">Reference proteome</keyword>
<keyword id="KW-0677">Repeat</keyword>
<keyword id="KW-0678">Repressor</keyword>
<keyword id="KW-0949">S-adenosyl-L-methionine</keyword>
<keyword id="KW-0804">Transcription</keyword>
<keyword id="KW-0805">Transcription regulation</keyword>
<keyword id="KW-0808">Transferase</keyword>
<keyword id="KW-0832">Ubl conjugation</keyword>
<keyword id="KW-0862">Zinc</keyword>
<keyword id="KW-0863">Zinc-finger</keyword>
<dbReference type="EC" id="2.1.1.-"/>
<dbReference type="EMBL" id="AF084199">
    <property type="protein sequence ID" value="AAC33300.1"/>
    <property type="molecule type" value="mRNA"/>
</dbReference>
<dbReference type="EMBL" id="AY198414">
    <property type="protein sequence ID" value="AAO45623.1"/>
    <property type="status" value="ALT_INIT"/>
    <property type="molecule type" value="mRNA"/>
</dbReference>
<dbReference type="EMBL" id="AY198415">
    <property type="protein sequence ID" value="AAO45624.1"/>
    <property type="molecule type" value="mRNA"/>
</dbReference>
<dbReference type="EMBL" id="AL358952">
    <property type="status" value="NOT_ANNOTATED_CDS"/>
    <property type="molecule type" value="Genomic_DNA"/>
</dbReference>
<dbReference type="EMBL" id="AL022067">
    <property type="status" value="NOT_ANNOTATED_CDS"/>
    <property type="molecule type" value="Genomic_DNA"/>
</dbReference>
<dbReference type="EMBL" id="CH471051">
    <property type="protein sequence ID" value="EAW48419.1"/>
    <property type="molecule type" value="Genomic_DNA"/>
</dbReference>
<dbReference type="EMBL" id="CH471051">
    <property type="protein sequence ID" value="EAW48421.1"/>
    <property type="molecule type" value="Genomic_DNA"/>
</dbReference>
<dbReference type="EMBL" id="CH471051">
    <property type="protein sequence ID" value="EAW48422.1"/>
    <property type="molecule type" value="Genomic_DNA"/>
</dbReference>
<dbReference type="EMBL" id="BC103832">
    <property type="protein sequence ID" value="AAI03833.1"/>
    <property type="molecule type" value="mRNA"/>
</dbReference>
<dbReference type="EMBL" id="BC103833">
    <property type="protein sequence ID" value="AAI03834.1"/>
    <property type="molecule type" value="mRNA"/>
</dbReference>
<dbReference type="EMBL" id="BC103834">
    <property type="protein sequence ID" value="AAI03835.1"/>
    <property type="molecule type" value="mRNA"/>
</dbReference>
<dbReference type="CCDS" id="CCDS34505.1">
    <molecule id="O75626-3"/>
</dbReference>
<dbReference type="CCDS" id="CCDS5054.2">
    <molecule id="O75626-1"/>
</dbReference>
<dbReference type="PIR" id="A39564">
    <property type="entry name" value="A39564"/>
</dbReference>
<dbReference type="RefSeq" id="NP_001189.2">
    <molecule id="O75626-1"/>
    <property type="nucleotide sequence ID" value="NM_001198.4"/>
</dbReference>
<dbReference type="RefSeq" id="NP_878911.1">
    <molecule id="O75626-3"/>
    <property type="nucleotide sequence ID" value="NM_182907.3"/>
</dbReference>
<dbReference type="RefSeq" id="XP_011534365.1">
    <property type="nucleotide sequence ID" value="XM_011536063.2"/>
</dbReference>
<dbReference type="RefSeq" id="XP_016866676.1">
    <molecule id="O75626-2"/>
    <property type="nucleotide sequence ID" value="XM_017011187.2"/>
</dbReference>
<dbReference type="RefSeq" id="XP_047275202.1">
    <molecule id="O75626-2"/>
    <property type="nucleotide sequence ID" value="XM_047419246.1"/>
</dbReference>
<dbReference type="PDB" id="3DAL">
    <property type="method" value="X-ray"/>
    <property type="resolution" value="1.65 A"/>
    <property type="chains" value="A/B=38-223"/>
</dbReference>
<dbReference type="PDBsum" id="3DAL"/>
<dbReference type="SMR" id="O75626"/>
<dbReference type="BioGRID" id="107108">
    <property type="interactions" value="80"/>
</dbReference>
<dbReference type="FunCoup" id="O75626">
    <property type="interactions" value="3534"/>
</dbReference>
<dbReference type="IntAct" id="O75626">
    <property type="interactions" value="63"/>
</dbReference>
<dbReference type="MINT" id="O75626"/>
<dbReference type="STRING" id="9606.ENSP00000358092"/>
<dbReference type="ChEMBL" id="CHEMBL5214860"/>
<dbReference type="GlyGen" id="O75626">
    <property type="glycosylation" value="5 sites, 1 O-linked glycan (3 sites)"/>
</dbReference>
<dbReference type="iPTMnet" id="O75626"/>
<dbReference type="PhosphoSitePlus" id="O75626"/>
<dbReference type="BioMuta" id="PRDM1"/>
<dbReference type="jPOST" id="O75626"/>
<dbReference type="MassIVE" id="O75626"/>
<dbReference type="PaxDb" id="9606-ENSP00000358092"/>
<dbReference type="PeptideAtlas" id="O75626"/>
<dbReference type="ProteomicsDB" id="50124">
    <molecule id="O75626-1"/>
</dbReference>
<dbReference type="ProteomicsDB" id="50125">
    <molecule id="O75626-2"/>
</dbReference>
<dbReference type="ProteomicsDB" id="50126">
    <molecule id="O75626-3"/>
</dbReference>
<dbReference type="Antibodypedia" id="19038">
    <property type="antibodies" value="701 antibodies from 38 providers"/>
</dbReference>
<dbReference type="DNASU" id="639"/>
<dbReference type="Ensembl" id="ENST00000369089.3">
    <molecule id="O75626-3"/>
    <property type="protein sequence ID" value="ENSP00000358085.3"/>
    <property type="gene ID" value="ENSG00000057657.17"/>
</dbReference>
<dbReference type="Ensembl" id="ENST00000369091.6">
    <molecule id="O75626-2"/>
    <property type="protein sequence ID" value="ENSP00000358087.2"/>
    <property type="gene ID" value="ENSG00000057657.17"/>
</dbReference>
<dbReference type="Ensembl" id="ENST00000369096.9">
    <molecule id="O75626-1"/>
    <property type="protein sequence ID" value="ENSP00000358092.4"/>
    <property type="gene ID" value="ENSG00000057657.17"/>
</dbReference>
<dbReference type="Ensembl" id="ENST00000651185.1">
    <molecule id="O75626-2"/>
    <property type="protein sequence ID" value="ENSP00000498716.1"/>
    <property type="gene ID" value="ENSG00000057657.17"/>
</dbReference>
<dbReference type="Ensembl" id="ENST00000652320.1">
    <molecule id="O75626-2"/>
    <property type="protein sequence ID" value="ENSP00000498580.1"/>
    <property type="gene ID" value="ENSG00000057657.17"/>
</dbReference>
<dbReference type="GeneID" id="639"/>
<dbReference type="KEGG" id="hsa:639"/>
<dbReference type="MANE-Select" id="ENST00000369096.9">
    <property type="protein sequence ID" value="ENSP00000358092.4"/>
    <property type="RefSeq nucleotide sequence ID" value="NM_001198.4"/>
    <property type="RefSeq protein sequence ID" value="NP_001189.2"/>
</dbReference>
<dbReference type="UCSC" id="uc003prd.3">
    <molecule id="O75626-1"/>
    <property type="organism name" value="human"/>
</dbReference>
<dbReference type="AGR" id="HGNC:9346"/>
<dbReference type="CTD" id="639"/>
<dbReference type="DisGeNET" id="639"/>
<dbReference type="GeneCards" id="PRDM1"/>
<dbReference type="HGNC" id="HGNC:9346">
    <property type="gene designation" value="PRDM1"/>
</dbReference>
<dbReference type="HPA" id="ENSG00000057657">
    <property type="expression patterns" value="Tissue enhanced (esophagus)"/>
</dbReference>
<dbReference type="MalaCards" id="PRDM1"/>
<dbReference type="MIM" id="603423">
    <property type="type" value="gene"/>
</dbReference>
<dbReference type="neXtProt" id="NX_O75626"/>
<dbReference type="OpenTargets" id="ENSG00000057657"/>
<dbReference type="PharmGKB" id="PA33707"/>
<dbReference type="VEuPathDB" id="HostDB:ENSG00000057657"/>
<dbReference type="eggNOG" id="KOG2461">
    <property type="taxonomic scope" value="Eukaryota"/>
</dbReference>
<dbReference type="GeneTree" id="ENSGT00940000154798"/>
<dbReference type="HOGENOM" id="CLU_007033_2_1_1"/>
<dbReference type="InParanoid" id="O75626"/>
<dbReference type="OMA" id="LIMKMDM"/>
<dbReference type="OrthoDB" id="9345291at2759"/>
<dbReference type="PAN-GO" id="O75626">
    <property type="GO annotations" value="7 GO annotations based on evolutionary models"/>
</dbReference>
<dbReference type="PhylomeDB" id="O75626"/>
<dbReference type="TreeFam" id="TF316545"/>
<dbReference type="PathwayCommons" id="O75626"/>
<dbReference type="Reactome" id="R-HSA-6804754">
    <property type="pathway name" value="Regulation of TP53 Expression"/>
</dbReference>
<dbReference type="Reactome" id="R-HSA-9701898">
    <property type="pathway name" value="STAT3 nuclear events downstream of ALK signaling"/>
</dbReference>
<dbReference type="Reactome" id="R-HSA-9827857">
    <property type="pathway name" value="Specification of primordial germ cells"/>
</dbReference>
<dbReference type="SignaLink" id="O75626"/>
<dbReference type="SIGNOR" id="O75626"/>
<dbReference type="BioGRID-ORCS" id="639">
    <property type="hits" value="35 hits in 1191 CRISPR screens"/>
</dbReference>
<dbReference type="ChiTaRS" id="PRDM1">
    <property type="organism name" value="human"/>
</dbReference>
<dbReference type="EvolutionaryTrace" id="O75626"/>
<dbReference type="GeneWiki" id="PRDM1"/>
<dbReference type="GenomeRNAi" id="639"/>
<dbReference type="Pharos" id="O75626">
    <property type="development level" value="Tbio"/>
</dbReference>
<dbReference type="PRO" id="PR:O75626"/>
<dbReference type="Proteomes" id="UP000005640">
    <property type="component" value="Chromosome 6"/>
</dbReference>
<dbReference type="RNAct" id="O75626">
    <property type="molecule type" value="protein"/>
</dbReference>
<dbReference type="Bgee" id="ENSG00000057657">
    <property type="expression patterns" value="Expressed in lower esophagus mucosa and 145 other cell types or tissues"/>
</dbReference>
<dbReference type="ExpressionAtlas" id="O75626">
    <property type="expression patterns" value="baseline and differential"/>
</dbReference>
<dbReference type="GO" id="GO:0005737">
    <property type="term" value="C:cytoplasm"/>
    <property type="evidence" value="ECO:0000314"/>
    <property type="project" value="UniProtKB"/>
</dbReference>
<dbReference type="GO" id="GO:0005730">
    <property type="term" value="C:nucleolus"/>
    <property type="evidence" value="ECO:0000314"/>
    <property type="project" value="HPA"/>
</dbReference>
<dbReference type="GO" id="GO:0005654">
    <property type="term" value="C:nucleoplasm"/>
    <property type="evidence" value="ECO:0000314"/>
    <property type="project" value="HPA"/>
</dbReference>
<dbReference type="GO" id="GO:0005634">
    <property type="term" value="C:nucleus"/>
    <property type="evidence" value="ECO:0000314"/>
    <property type="project" value="UniProtKB"/>
</dbReference>
<dbReference type="GO" id="GO:0003700">
    <property type="term" value="F:DNA-binding transcription factor activity"/>
    <property type="evidence" value="ECO:0000318"/>
    <property type="project" value="GO_Central"/>
</dbReference>
<dbReference type="GO" id="GO:0001227">
    <property type="term" value="F:DNA-binding transcription repressor activity, RNA polymerase II-specific"/>
    <property type="evidence" value="ECO:0000314"/>
    <property type="project" value="NTNU_SB"/>
</dbReference>
<dbReference type="GO" id="GO:1990226">
    <property type="term" value="F:histone methyltransferase binding"/>
    <property type="evidence" value="ECO:0007669"/>
    <property type="project" value="Ensembl"/>
</dbReference>
<dbReference type="GO" id="GO:0008168">
    <property type="term" value="F:methyltransferase activity"/>
    <property type="evidence" value="ECO:0007669"/>
    <property type="project" value="UniProtKB-KW"/>
</dbReference>
<dbReference type="GO" id="GO:1990841">
    <property type="term" value="F:promoter-specific chromatin binding"/>
    <property type="evidence" value="ECO:0000250"/>
    <property type="project" value="UniProtKB"/>
</dbReference>
<dbReference type="GO" id="GO:0000978">
    <property type="term" value="F:RNA polymerase II cis-regulatory region sequence-specific DNA binding"/>
    <property type="evidence" value="ECO:0000314"/>
    <property type="project" value="NTNU_SB"/>
</dbReference>
<dbReference type="GO" id="GO:1990837">
    <property type="term" value="F:sequence-specific double-stranded DNA binding"/>
    <property type="evidence" value="ECO:0000314"/>
    <property type="project" value="ARUK-UCL"/>
</dbReference>
<dbReference type="GO" id="GO:0008270">
    <property type="term" value="F:zinc ion binding"/>
    <property type="evidence" value="ECO:0007669"/>
    <property type="project" value="UniProtKB-KW"/>
</dbReference>
<dbReference type="GO" id="GO:0002250">
    <property type="term" value="P:adaptive immune response"/>
    <property type="evidence" value="ECO:0007669"/>
    <property type="project" value="UniProtKB-KW"/>
</dbReference>
<dbReference type="GO" id="GO:0035904">
    <property type="term" value="P:aorta development"/>
    <property type="evidence" value="ECO:0007669"/>
    <property type="project" value="Ensembl"/>
</dbReference>
<dbReference type="GO" id="GO:0048844">
    <property type="term" value="P:artery morphogenesis"/>
    <property type="evidence" value="ECO:0007669"/>
    <property type="project" value="Ensembl"/>
</dbReference>
<dbReference type="GO" id="GO:0045165">
    <property type="term" value="P:cell fate commitment"/>
    <property type="evidence" value="ECO:0000318"/>
    <property type="project" value="GO_Central"/>
</dbReference>
<dbReference type="GO" id="GO:0060976">
    <property type="term" value="P:coronary vasculature development"/>
    <property type="evidence" value="ECO:0007669"/>
    <property type="project" value="Ensembl"/>
</dbReference>
<dbReference type="GO" id="GO:0042462">
    <property type="term" value="P:eye photoreceptor cell development"/>
    <property type="evidence" value="ECO:0007669"/>
    <property type="project" value="Ensembl"/>
</dbReference>
<dbReference type="GO" id="GO:0010467">
    <property type="term" value="P:gene expression"/>
    <property type="evidence" value="ECO:0007669"/>
    <property type="project" value="Ensembl"/>
</dbReference>
<dbReference type="GO" id="GO:0007281">
    <property type="term" value="P:germ cell development"/>
    <property type="evidence" value="ECO:0007669"/>
    <property type="project" value="Ensembl"/>
</dbReference>
<dbReference type="GO" id="GO:0003170">
    <property type="term" value="P:heart valve development"/>
    <property type="evidence" value="ECO:0007669"/>
    <property type="project" value="Ensembl"/>
</dbReference>
<dbReference type="GO" id="GO:0045087">
    <property type="term" value="P:innate immune response"/>
    <property type="evidence" value="ECO:0007669"/>
    <property type="project" value="UniProtKB-KW"/>
</dbReference>
<dbReference type="GO" id="GO:0060576">
    <property type="term" value="P:intestinal epithelial cell development"/>
    <property type="evidence" value="ECO:0007669"/>
    <property type="project" value="Ensembl"/>
</dbReference>
<dbReference type="GO" id="GO:0001822">
    <property type="term" value="P:kidney development"/>
    <property type="evidence" value="ECO:0007669"/>
    <property type="project" value="Ensembl"/>
</dbReference>
<dbReference type="GO" id="GO:0001893">
    <property type="term" value="P:maternal placenta development"/>
    <property type="evidence" value="ECO:0007669"/>
    <property type="project" value="Ensembl"/>
</dbReference>
<dbReference type="GO" id="GO:0032259">
    <property type="term" value="P:methylation"/>
    <property type="evidence" value="ECO:0007669"/>
    <property type="project" value="UniProtKB-KW"/>
</dbReference>
<dbReference type="GO" id="GO:0001763">
    <property type="term" value="P:morphogenesis of a branching structure"/>
    <property type="evidence" value="ECO:0007669"/>
    <property type="project" value="Ensembl"/>
</dbReference>
<dbReference type="GO" id="GO:0010629">
    <property type="term" value="P:negative regulation of gene expression"/>
    <property type="evidence" value="ECO:0007669"/>
    <property type="project" value="Ensembl"/>
</dbReference>
<dbReference type="GO" id="GO:0000122">
    <property type="term" value="P:negative regulation of transcription by RNA polymerase II"/>
    <property type="evidence" value="ECO:0000314"/>
    <property type="project" value="NTNU_SB"/>
</dbReference>
<dbReference type="GO" id="GO:0010628">
    <property type="term" value="P:positive regulation of gene expression"/>
    <property type="evidence" value="ECO:0007669"/>
    <property type="project" value="Ensembl"/>
</dbReference>
<dbReference type="GO" id="GO:0009791">
    <property type="term" value="P:post-embryonic development"/>
    <property type="evidence" value="ECO:0007669"/>
    <property type="project" value="Ensembl"/>
</dbReference>
<dbReference type="GO" id="GO:0042127">
    <property type="term" value="P:regulation of cell population proliferation"/>
    <property type="evidence" value="ECO:0007669"/>
    <property type="project" value="Ensembl"/>
</dbReference>
<dbReference type="GO" id="GO:0033082">
    <property type="term" value="P:regulation of extrathymic T cell differentiation"/>
    <property type="evidence" value="ECO:0000250"/>
    <property type="project" value="UniProtKB"/>
</dbReference>
<dbReference type="GO" id="GO:0032823">
    <property type="term" value="P:regulation of natural killer cell differentiation"/>
    <property type="evidence" value="ECO:0000250"/>
    <property type="project" value="UniProtKB"/>
</dbReference>
<dbReference type="GO" id="GO:0051136">
    <property type="term" value="P:regulation of NK T cell differentiation"/>
    <property type="evidence" value="ECO:0000250"/>
    <property type="project" value="UniProtKB"/>
</dbReference>
<dbReference type="GO" id="GO:0006357">
    <property type="term" value="P:regulation of transcription by RNA polymerase II"/>
    <property type="evidence" value="ECO:0000318"/>
    <property type="project" value="GO_Central"/>
</dbReference>
<dbReference type="GO" id="GO:0060040">
    <property type="term" value="P:retinal bipolar neuron differentiation"/>
    <property type="evidence" value="ECO:0007669"/>
    <property type="project" value="Ensembl"/>
</dbReference>
<dbReference type="GO" id="GO:1990654">
    <property type="term" value="P:sebum secreting cell proliferation"/>
    <property type="evidence" value="ECO:0007669"/>
    <property type="project" value="Ensembl"/>
</dbReference>
<dbReference type="GO" id="GO:0060707">
    <property type="term" value="P:trophoblast giant cell differentiation"/>
    <property type="evidence" value="ECO:0007669"/>
    <property type="project" value="Ensembl"/>
</dbReference>
<dbReference type="GO" id="GO:0003281">
    <property type="term" value="P:ventricular septum development"/>
    <property type="evidence" value="ECO:0007669"/>
    <property type="project" value="Ensembl"/>
</dbReference>
<dbReference type="CDD" id="cd19187">
    <property type="entry name" value="PR-SET_PRDM1"/>
    <property type="match status" value="1"/>
</dbReference>
<dbReference type="FunFam" id="3.30.160.60:FF:000748">
    <property type="entry name" value="PR domain zinc finger protein"/>
    <property type="match status" value="1"/>
</dbReference>
<dbReference type="FunFam" id="2.170.270.10:FF:000019">
    <property type="entry name" value="PR domain zinc finger protein 1"/>
    <property type="match status" value="1"/>
</dbReference>
<dbReference type="FunFam" id="3.30.160.60:FF:000132">
    <property type="entry name" value="PR domain zinc finger protein 1"/>
    <property type="match status" value="1"/>
</dbReference>
<dbReference type="FunFam" id="3.30.160.60:FF:000211">
    <property type="entry name" value="PR domain zinc finger protein 1"/>
    <property type="match status" value="1"/>
</dbReference>
<dbReference type="FunFam" id="3.30.160.60:FF:000262">
    <property type="entry name" value="PR domain zinc finger protein 1"/>
    <property type="match status" value="1"/>
</dbReference>
<dbReference type="FunFam" id="3.30.160.60:FF:000446">
    <property type="entry name" value="Zinc finger protein"/>
    <property type="match status" value="1"/>
</dbReference>
<dbReference type="Gene3D" id="3.30.160.60">
    <property type="entry name" value="Classic Zinc Finger"/>
    <property type="match status" value="5"/>
</dbReference>
<dbReference type="Gene3D" id="2.170.270.10">
    <property type="entry name" value="SET domain"/>
    <property type="match status" value="1"/>
</dbReference>
<dbReference type="InterPro" id="IPR016608">
    <property type="entry name" value="PRDM1"/>
</dbReference>
<dbReference type="InterPro" id="IPR044413">
    <property type="entry name" value="PRDM1_PR-SET"/>
</dbReference>
<dbReference type="InterPro" id="IPR001214">
    <property type="entry name" value="SET_dom"/>
</dbReference>
<dbReference type="InterPro" id="IPR046341">
    <property type="entry name" value="SET_dom_sf"/>
</dbReference>
<dbReference type="InterPro" id="IPR050331">
    <property type="entry name" value="Zinc_finger"/>
</dbReference>
<dbReference type="InterPro" id="IPR036236">
    <property type="entry name" value="Znf_C2H2_sf"/>
</dbReference>
<dbReference type="InterPro" id="IPR013087">
    <property type="entry name" value="Znf_C2H2_type"/>
</dbReference>
<dbReference type="PANTHER" id="PTHR16515">
    <property type="entry name" value="PR DOMAIN ZINC FINGER PROTEIN"/>
    <property type="match status" value="1"/>
</dbReference>
<dbReference type="PANTHER" id="PTHR16515:SF63">
    <property type="entry name" value="PR DOMAIN ZINC FINGER PROTEIN 1"/>
    <property type="match status" value="1"/>
</dbReference>
<dbReference type="Pfam" id="PF21549">
    <property type="entry name" value="PRDM2_PR"/>
    <property type="match status" value="1"/>
</dbReference>
<dbReference type="Pfam" id="PF00096">
    <property type="entry name" value="zf-C2H2"/>
    <property type="match status" value="4"/>
</dbReference>
<dbReference type="PIRSF" id="PIRSF013212">
    <property type="entry name" value="PRDM1"/>
    <property type="match status" value="1"/>
</dbReference>
<dbReference type="SMART" id="SM00317">
    <property type="entry name" value="SET"/>
    <property type="match status" value="1"/>
</dbReference>
<dbReference type="SMART" id="SM00355">
    <property type="entry name" value="ZnF_C2H2"/>
    <property type="match status" value="5"/>
</dbReference>
<dbReference type="SUPFAM" id="SSF57667">
    <property type="entry name" value="beta-beta-alpha zinc fingers"/>
    <property type="match status" value="3"/>
</dbReference>
<dbReference type="SUPFAM" id="SSF82199">
    <property type="entry name" value="SET domain"/>
    <property type="match status" value="1"/>
</dbReference>
<dbReference type="PROSITE" id="PS50280">
    <property type="entry name" value="SET"/>
    <property type="match status" value="1"/>
</dbReference>
<dbReference type="PROSITE" id="PS00028">
    <property type="entry name" value="ZINC_FINGER_C2H2_1"/>
    <property type="match status" value="4"/>
</dbReference>
<dbReference type="PROSITE" id="PS50157">
    <property type="entry name" value="ZINC_FINGER_C2H2_2"/>
    <property type="match status" value="4"/>
</dbReference>
<name>PRDM1_HUMAN</name>
<reference key="1">
    <citation type="journal article" date="1991" name="Genes Dev.">
        <title>Identification and characterization of a novel repressor of beta-interferon gene expression.</title>
        <authorList>
            <person name="Keller A.D."/>
            <person name="Maniatis T."/>
        </authorList>
    </citation>
    <scope>NUCLEOTIDE SEQUENCE [MRNA] (ISOFORM 2)</scope>
    <scope>FUNCTION</scope>
</reference>
<reference key="2">
    <citation type="journal article" date="2003" name="J. Immunol.">
        <title>Identification of a functionally impaired positive regulatory domain I binding factor 1 transcription repressor in myeloma cell lines.</title>
        <authorList>
            <person name="Gyory I."/>
            <person name="Fejer G."/>
            <person name="Ghosh N."/>
            <person name="Seto E."/>
            <person name="Wright K.L."/>
        </authorList>
    </citation>
    <scope>NUCLEOTIDE SEQUENCE [MRNA] (ISOFORMS 1 AND 3)</scope>
    <scope>FUNCTION</scope>
</reference>
<reference key="3">
    <citation type="journal article" date="2003" name="Nature">
        <title>The DNA sequence and analysis of human chromosome 6.</title>
        <authorList>
            <person name="Mungall A.J."/>
            <person name="Palmer S.A."/>
            <person name="Sims S.K."/>
            <person name="Edwards C.A."/>
            <person name="Ashurst J.L."/>
            <person name="Wilming L."/>
            <person name="Jones M.C."/>
            <person name="Horton R."/>
            <person name="Hunt S.E."/>
            <person name="Scott C.E."/>
            <person name="Gilbert J.G.R."/>
            <person name="Clamp M.E."/>
            <person name="Bethel G."/>
            <person name="Milne S."/>
            <person name="Ainscough R."/>
            <person name="Almeida J.P."/>
            <person name="Ambrose K.D."/>
            <person name="Andrews T.D."/>
            <person name="Ashwell R.I.S."/>
            <person name="Babbage A.K."/>
            <person name="Bagguley C.L."/>
            <person name="Bailey J."/>
            <person name="Banerjee R."/>
            <person name="Barker D.J."/>
            <person name="Barlow K.F."/>
            <person name="Bates K."/>
            <person name="Beare D.M."/>
            <person name="Beasley H."/>
            <person name="Beasley O."/>
            <person name="Bird C.P."/>
            <person name="Blakey S.E."/>
            <person name="Bray-Allen S."/>
            <person name="Brook J."/>
            <person name="Brown A.J."/>
            <person name="Brown J.Y."/>
            <person name="Burford D.C."/>
            <person name="Burrill W."/>
            <person name="Burton J."/>
            <person name="Carder C."/>
            <person name="Carter N.P."/>
            <person name="Chapman J.C."/>
            <person name="Clark S.Y."/>
            <person name="Clark G."/>
            <person name="Clee C.M."/>
            <person name="Clegg S."/>
            <person name="Cobley V."/>
            <person name="Collier R.E."/>
            <person name="Collins J.E."/>
            <person name="Colman L.K."/>
            <person name="Corby N.R."/>
            <person name="Coville G.J."/>
            <person name="Culley K.M."/>
            <person name="Dhami P."/>
            <person name="Davies J."/>
            <person name="Dunn M."/>
            <person name="Earthrowl M.E."/>
            <person name="Ellington A.E."/>
            <person name="Evans K.A."/>
            <person name="Faulkner L."/>
            <person name="Francis M.D."/>
            <person name="Frankish A."/>
            <person name="Frankland J."/>
            <person name="French L."/>
            <person name="Garner P."/>
            <person name="Garnett J."/>
            <person name="Ghori M.J."/>
            <person name="Gilby L.M."/>
            <person name="Gillson C.J."/>
            <person name="Glithero R.J."/>
            <person name="Grafham D.V."/>
            <person name="Grant M."/>
            <person name="Gribble S."/>
            <person name="Griffiths C."/>
            <person name="Griffiths M.N.D."/>
            <person name="Hall R."/>
            <person name="Halls K.S."/>
            <person name="Hammond S."/>
            <person name="Harley J.L."/>
            <person name="Hart E.A."/>
            <person name="Heath P.D."/>
            <person name="Heathcott R."/>
            <person name="Holmes S.J."/>
            <person name="Howden P.J."/>
            <person name="Howe K.L."/>
            <person name="Howell G.R."/>
            <person name="Huckle E."/>
            <person name="Humphray S.J."/>
            <person name="Humphries M.D."/>
            <person name="Hunt A.R."/>
            <person name="Johnson C.M."/>
            <person name="Joy A.A."/>
            <person name="Kay M."/>
            <person name="Keenan S.J."/>
            <person name="Kimberley A.M."/>
            <person name="King A."/>
            <person name="Laird G.K."/>
            <person name="Langford C."/>
            <person name="Lawlor S."/>
            <person name="Leongamornlert D.A."/>
            <person name="Leversha M."/>
            <person name="Lloyd C.R."/>
            <person name="Lloyd D.M."/>
            <person name="Loveland J.E."/>
            <person name="Lovell J."/>
            <person name="Martin S."/>
            <person name="Mashreghi-Mohammadi M."/>
            <person name="Maslen G.L."/>
            <person name="Matthews L."/>
            <person name="McCann O.T."/>
            <person name="McLaren S.J."/>
            <person name="McLay K."/>
            <person name="McMurray A."/>
            <person name="Moore M.J.F."/>
            <person name="Mullikin J.C."/>
            <person name="Niblett D."/>
            <person name="Nickerson T."/>
            <person name="Novik K.L."/>
            <person name="Oliver K."/>
            <person name="Overton-Larty E.K."/>
            <person name="Parker A."/>
            <person name="Patel R."/>
            <person name="Pearce A.V."/>
            <person name="Peck A.I."/>
            <person name="Phillimore B.J.C.T."/>
            <person name="Phillips S."/>
            <person name="Plumb R.W."/>
            <person name="Porter K.M."/>
            <person name="Ramsey Y."/>
            <person name="Ranby S.A."/>
            <person name="Rice C.M."/>
            <person name="Ross M.T."/>
            <person name="Searle S.M."/>
            <person name="Sehra H.K."/>
            <person name="Sheridan E."/>
            <person name="Skuce C.D."/>
            <person name="Smith S."/>
            <person name="Smith M."/>
            <person name="Spraggon L."/>
            <person name="Squares S.L."/>
            <person name="Steward C.A."/>
            <person name="Sycamore N."/>
            <person name="Tamlyn-Hall G."/>
            <person name="Tester J."/>
            <person name="Theaker A.J."/>
            <person name="Thomas D.W."/>
            <person name="Thorpe A."/>
            <person name="Tracey A."/>
            <person name="Tromans A."/>
            <person name="Tubby B."/>
            <person name="Wall M."/>
            <person name="Wallis J.M."/>
            <person name="West A.P."/>
            <person name="White S.S."/>
            <person name="Whitehead S.L."/>
            <person name="Whittaker H."/>
            <person name="Wild A."/>
            <person name="Willey D.J."/>
            <person name="Wilmer T.E."/>
            <person name="Wood J.M."/>
            <person name="Wray P.W."/>
            <person name="Wyatt J.C."/>
            <person name="Young L."/>
            <person name="Younger R.M."/>
            <person name="Bentley D.R."/>
            <person name="Coulson A."/>
            <person name="Durbin R.M."/>
            <person name="Hubbard T."/>
            <person name="Sulston J.E."/>
            <person name="Dunham I."/>
            <person name="Rogers J."/>
            <person name="Beck S."/>
        </authorList>
    </citation>
    <scope>NUCLEOTIDE SEQUENCE [LARGE SCALE GENOMIC DNA]</scope>
</reference>
<reference key="4">
    <citation type="submission" date="2005-09" db="EMBL/GenBank/DDBJ databases">
        <authorList>
            <person name="Mural R.J."/>
            <person name="Istrail S."/>
            <person name="Sutton G.G."/>
            <person name="Florea L."/>
            <person name="Halpern A.L."/>
            <person name="Mobarry C.M."/>
            <person name="Lippert R."/>
            <person name="Walenz B."/>
            <person name="Shatkay H."/>
            <person name="Dew I."/>
            <person name="Miller J.R."/>
            <person name="Flanigan M.J."/>
            <person name="Edwards N.J."/>
            <person name="Bolanos R."/>
            <person name="Fasulo D."/>
            <person name="Halldorsson B.V."/>
            <person name="Hannenhalli S."/>
            <person name="Turner R."/>
            <person name="Yooseph S."/>
            <person name="Lu F."/>
            <person name="Nusskern D.R."/>
            <person name="Shue B.C."/>
            <person name="Zheng X.H."/>
            <person name="Zhong F."/>
            <person name="Delcher A.L."/>
            <person name="Huson D.H."/>
            <person name="Kravitz S.A."/>
            <person name="Mouchard L."/>
            <person name="Reinert K."/>
            <person name="Remington K.A."/>
            <person name="Clark A.G."/>
            <person name="Waterman M.S."/>
            <person name="Eichler E.E."/>
            <person name="Adams M.D."/>
            <person name="Hunkapiller M.W."/>
            <person name="Myers E.W."/>
            <person name="Venter J.C."/>
        </authorList>
    </citation>
    <scope>NUCLEOTIDE SEQUENCE [LARGE SCALE GENOMIC DNA]</scope>
</reference>
<reference key="5">
    <citation type="journal article" date="2004" name="Genome Res.">
        <title>The status, quality, and expansion of the NIH full-length cDNA project: the Mammalian Gene Collection (MGC).</title>
        <authorList>
            <consortium name="The MGC Project Team"/>
        </authorList>
    </citation>
    <scope>NUCLEOTIDE SEQUENCE [LARGE SCALE MRNA] (ISOFORM 3)</scope>
</reference>
<reference key="6">
    <citation type="journal article" date="2011" name="Hum. Mol. Genet.">
        <title>NANOS3 function in human germ cell development.</title>
        <authorList>
            <person name="Julaton V.T."/>
            <person name="Reijo Pera R.A."/>
        </authorList>
    </citation>
    <scope>SUBCELLULAR LOCATION</scope>
</reference>
<reference key="7">
    <citation type="journal article" date="2012" name="EMBO Rep.">
        <title>SUMOylation of Blimp-1 is critical for plasma cell differentiation.</title>
        <authorList>
            <person name="Ying H.Y."/>
            <person name="Su S.T."/>
            <person name="Hsu P.H."/>
            <person name="Chang C.C."/>
            <person name="Lin I.Y."/>
            <person name="Tseng Y.H."/>
            <person name="Tsai M.D."/>
            <person name="Shih H.M."/>
            <person name="Lin K.I."/>
        </authorList>
    </citation>
    <scope>SUMOYLATION AT LYS-816</scope>
</reference>
<reference key="8">
    <citation type="journal article" date="2014" name="Dev. Cell">
        <title>DRE-1/FBXO11-dependent degradation of BLMP-1/BLIMP-1 governs C. elegans developmental timing and maturation.</title>
        <authorList>
            <person name="Horn M."/>
            <person name="Geisen C."/>
            <person name="Cermak L."/>
            <person name="Becker B."/>
            <person name="Nakamura S."/>
            <person name="Klein C."/>
            <person name="Pagano M."/>
            <person name="Antebi A."/>
        </authorList>
    </citation>
    <scope>INTERACTION WITH FBXO10 AND FBXO11</scope>
    <scope>UBIQUITINATION</scope>
</reference>
<reference key="9">
    <citation type="journal article" date="2014" name="PLoS Genet.">
        <title>BLMP-1/Blimp-1 regulates the spatiotemporal cell migration pattern in C. elegans.</title>
        <authorList>
            <person name="Huang T.F."/>
            <person name="Cho C.Y."/>
            <person name="Cheng Y.T."/>
            <person name="Huang J.W."/>
            <person name="Wu Y.Z."/>
            <person name="Yeh A.Y."/>
            <person name="Nishiwaki K."/>
            <person name="Chang S.C."/>
            <person name="Wu Y.C."/>
        </authorList>
    </citation>
    <scope>INTERACTION WITH FBXO11</scope>
</reference>
<reference key="10">
    <citation type="journal article" date="2017" name="Nat. Struct. Mol. Biol.">
        <title>Site-specific mapping of the human SUMO proteome reveals co-modification with phosphorylation.</title>
        <authorList>
            <person name="Hendriks I.A."/>
            <person name="Lyon D."/>
            <person name="Young C."/>
            <person name="Jensen L.J."/>
            <person name="Vertegaal A.C."/>
            <person name="Nielsen M.L."/>
        </authorList>
    </citation>
    <scope>SUMOYLATION [LARGE SCALE ANALYSIS] AT LYS-816</scope>
    <scope>IDENTIFICATION BY MASS SPECTROMETRY [LARGE SCALE ANALYSIS]</scope>
</reference>
<reference key="11">
    <citation type="journal article" date="2020" name="Biochim. Biophys. Acta">
        <title>LDB1 and the SWI/SNF complex participate in both transcriptional activation and repression by Caenorhabditis elegans BLIMP1/PRDM1.</title>
        <authorList>
            <person name="Fong H.T."/>
            <person name="Hagen T."/>
            <person name="Inoue T."/>
        </authorList>
    </citation>
    <scope>INTERACTION WITH LDB1; SMARCD3 AND SMARCC1</scope>
</reference>
<reference key="12">
    <citation type="submission" date="2009-02" db="PDB data bank">
        <title>The crystal structure of methyltransferase domain of human PR domain-containing protein 1.</title>
        <authorList>
            <consortium name="Structural genomics consortium (SGC)"/>
        </authorList>
    </citation>
    <scope>X-RAY CRYSTALLOGRAPHY (1.65 ANGSTROMS) OF 38-223</scope>
</reference>
<reference key="13">
    <citation type="journal article" date="2017" name="Nat. Commun.">
        <title>HSP70-Hrd1 axis precludes the oncorepressor potential of N-terminal misfolded Blimp-1s in lymphoma cells.</title>
        <authorList>
            <person name="Wang W.F."/>
            <person name="Yan L."/>
            <person name="Liu Z."/>
            <person name="Liu L.X."/>
            <person name="Lin J."/>
            <person name="Liu Z.Y."/>
            <person name="Chen X.P."/>
            <person name="Zhang W."/>
            <person name="Xu Z.Z."/>
            <person name="Shi T."/>
            <person name="Li J.M."/>
            <person name="Zhao Y.L."/>
            <person name="Meng G."/>
            <person name="Xia Y."/>
            <person name="Li J.Y."/>
            <person name="Zhu J."/>
        </authorList>
    </citation>
    <scope>VARIANTS ARG-84 AND ARG-107</scope>
    <scope>CHARACTERIZATION OF VARIANTS ARG-84 AND ARG-107</scope>
    <scope>INVOLVEMENT IN ABC-DLBCL</scope>
    <scope>MUTAGENESIS OF PRO-84 AND ILE-107</scope>
    <scope>UBIQUITINATION</scope>
    <scope>SUMOYLATION</scope>
    <scope>SUBCELLULAR LOCATION</scope>
    <scope>INTERACTION WITH CBX4; PIAS1; PIAS2; PIAS3; PIAS4; PML AND RNF4</scope>
</reference>
<sequence length="825" mass="91771">MLDICLEKRVGTTLAAPKCNSSTVRFQGLAEGTKGTMKMDMEDADMTLWTEAEFEEKCTYIVNDHPWDSGADGGTSVQAEASLPRNLLFKYATNSEEVIGVMSKEYIPKGTRFGPLIGEIYTNDTVPKNANRKYFWRIYSRGELHHFIDGFNEEKSNWMRYVNPAHSPREQNLAACQNGMNIYFYTIKPIPANQELLVWYCRDFAERLHYPYPGELTMMNLTQTQSSLKQPSTEKNELCPKNVPKREYSVKEILKLDSNPSKGKDLYRSNISPLTSEKDLDDFRRRGSPEMPFYPRVVYPIRAPLPEDFLKASLAYGIERPTYITRSPIPSSTTPSPSARSSPDQSLKSSSPHSSPGNTVSPVGPGSQEHRDSYAYLNASYGTEGLGSYPGYAPLPHLPPAFIPSYNAHYPKFLLPPYGMNCNGLSAVSSMNGINNFGLFPRLCPVYSNLLGGGSLPHPMLNPTSLPSSLPSDGARRLLQPEHPREVLVPAPHSAFSFTGAAASMKDKACSPTSGSPTAGTAATAEHVVQPKATSAAMAAPSSDEAMNLIKNKRNMTGYKTLPYPLKKQNGKIKYECNVCAKTFGQLSNLKVHLRVHSGERPFKCQTCNKGFTQLAHLQKHYLVHTGEKPHECQVCHKRFSSTSNLKTHLRLHSGEKPYQCKVCPAKFTQFVHLKLHKRLHTRERPHKCSQCHKNYIHLCSLKVHLKGNCAAAPAPGLPLEDLTRINEEIEKFDISDNADRLEDVEDDISVISVVEKEILAVVRKEKEETGLKVSLQRNMGNGLLSSGCSLYESSDLPLMKLPPSNPLPLVPVKVKQETVEPMDP</sequence>
<organism>
    <name type="scientific">Homo sapiens</name>
    <name type="common">Human</name>
    <dbReference type="NCBI Taxonomy" id="9606"/>
    <lineage>
        <taxon>Eukaryota</taxon>
        <taxon>Metazoa</taxon>
        <taxon>Chordata</taxon>
        <taxon>Craniata</taxon>
        <taxon>Vertebrata</taxon>
        <taxon>Euteleostomi</taxon>
        <taxon>Mammalia</taxon>
        <taxon>Eutheria</taxon>
        <taxon>Euarchontoglires</taxon>
        <taxon>Primates</taxon>
        <taxon>Haplorrhini</taxon>
        <taxon>Catarrhini</taxon>
        <taxon>Hominidae</taxon>
        <taxon>Homo</taxon>
    </lineage>
</organism>
<protein>
    <recommendedName>
        <fullName>PR domain zinc finger protein 1</fullName>
        <ecNumber>2.1.1.-</ecNumber>
    </recommendedName>
    <alternativeName>
        <fullName>BLIMP-1</fullName>
    </alternativeName>
    <alternativeName>
        <fullName>Beta-interferon gene positive regulatory domain I-binding factor</fullName>
    </alternativeName>
    <alternativeName>
        <fullName>PR domain-containing protein 1</fullName>
    </alternativeName>
    <alternativeName>
        <fullName>Positive regulatory domain I-binding factor 1</fullName>
        <shortName>PRDI-BF1</shortName>
        <shortName>PRDI-binding factor 1</shortName>
    </alternativeName>
</protein>
<proteinExistence type="evidence at protein level"/>
<accession>O75626</accession>
<accession>B2REA6</accession>
<accession>E1P5E0</accession>
<accession>Q86WM7</accession>
<evidence type="ECO:0000250" key="1">
    <source>
        <dbReference type="UniProtKB" id="Q60636"/>
    </source>
</evidence>
<evidence type="ECO:0000255" key="2">
    <source>
        <dbReference type="PROSITE-ProRule" id="PRU00042"/>
    </source>
</evidence>
<evidence type="ECO:0000255" key="3">
    <source>
        <dbReference type="PROSITE-ProRule" id="PRU00190"/>
    </source>
</evidence>
<evidence type="ECO:0000256" key="4">
    <source>
        <dbReference type="SAM" id="MobiDB-lite"/>
    </source>
</evidence>
<evidence type="ECO:0000269" key="5">
    <source>
    </source>
</evidence>
<evidence type="ECO:0000269" key="6">
    <source>
    </source>
</evidence>
<evidence type="ECO:0000269" key="7">
    <source>
    </source>
</evidence>
<evidence type="ECO:0000269" key="8">
    <source>
    </source>
</evidence>
<evidence type="ECO:0000269" key="9">
    <source>
    </source>
</evidence>
<evidence type="ECO:0000269" key="10">
    <source>
    </source>
</evidence>
<evidence type="ECO:0000269" key="11">
    <source>
    </source>
</evidence>
<evidence type="ECO:0000269" key="12">
    <source>
    </source>
</evidence>
<evidence type="ECO:0000303" key="13">
    <source>
    </source>
</evidence>
<evidence type="ECO:0000303" key="14">
    <source>
    </source>
</evidence>
<evidence type="ECO:0000303" key="15">
    <source>
    </source>
</evidence>
<evidence type="ECO:0000305" key="16"/>
<evidence type="ECO:0007744" key="17">
    <source>
    </source>
</evidence>
<evidence type="ECO:0007829" key="18">
    <source>
        <dbReference type="PDB" id="3DAL"/>
    </source>
</evidence>
<gene>
    <name type="primary">PRDM1</name>
    <name type="synonym">BLIMP1</name>
</gene>